<comment type="function">
    <text evidence="2 5 6">Involved in the D-alanylation of lipoteichoic acid (LTA). Could be responsible for the transfer of DltC-carried D-alanyl groups to cell membrane phosphatidylglycerol (PG), or alternatively of D-alanine residues from D-Ala-undecaprenol phosphate to the poly(glycerophosphate) chains of LTA. D-alanylation of LTA plays an important role in modulating the properties of the cell wall in Gram-positive bacteria, influencing the net charge of the cell wall.</text>
</comment>
<comment type="pathway">
    <text evidence="6">Cell wall biogenesis; lipoteichoic acid biosynthesis.</text>
</comment>
<comment type="subcellular location">
    <subcellularLocation>
        <location evidence="1">Cell membrane</location>
        <topology evidence="1">Single-pass type II membrane protein</topology>
        <orientation evidence="1">Extracellular side</orientation>
    </subcellularLocation>
</comment>
<comment type="similarity">
    <text evidence="4">Belongs to the DltD family.</text>
</comment>
<proteinExistence type="inferred from homology"/>
<feature type="chain" id="PRO_0000021107" description="Protein DltD">
    <location>
        <begin position="1"/>
        <end position="392"/>
    </location>
</feature>
<feature type="topological domain" description="Cytoplasmic" evidence="1">
    <location>
        <begin position="1"/>
        <end position="4"/>
    </location>
</feature>
<feature type="transmembrane region" description="Helical; Signal-anchor for type II membrane protein" evidence="3">
    <location>
        <begin position="5"/>
        <end position="25"/>
    </location>
</feature>
<feature type="topological domain" description="Extracellular" evidence="1">
    <location>
        <begin position="26"/>
        <end position="392"/>
    </location>
</feature>
<protein>
    <recommendedName>
        <fullName>Protein DltD</fullName>
    </recommendedName>
</protein>
<dbReference type="EMBL" id="X73124">
    <property type="protein sequence ID" value="CAA51558.1"/>
    <property type="molecule type" value="Genomic_DNA"/>
</dbReference>
<dbReference type="EMBL" id="AL009126">
    <property type="protein sequence ID" value="CAB15879.1"/>
    <property type="molecule type" value="Genomic_DNA"/>
</dbReference>
<dbReference type="PIR" id="S39657">
    <property type="entry name" value="S39657"/>
</dbReference>
<dbReference type="RefSeq" id="NP_391732.1">
    <property type="nucleotide sequence ID" value="NC_000964.3"/>
</dbReference>
<dbReference type="RefSeq" id="WP_003227323.1">
    <property type="nucleotide sequence ID" value="NZ_OZ025638.1"/>
</dbReference>
<dbReference type="SMR" id="P39578"/>
<dbReference type="FunCoup" id="P39578">
    <property type="interactions" value="185"/>
</dbReference>
<dbReference type="STRING" id="224308.BSU38530"/>
<dbReference type="PaxDb" id="224308-BSU38530"/>
<dbReference type="EnsemblBacteria" id="CAB15879">
    <property type="protein sequence ID" value="CAB15879"/>
    <property type="gene ID" value="BSU_38530"/>
</dbReference>
<dbReference type="GeneID" id="937362"/>
<dbReference type="KEGG" id="bsu:BSU38530"/>
<dbReference type="PATRIC" id="fig|224308.179.peg.4172"/>
<dbReference type="eggNOG" id="COG3966">
    <property type="taxonomic scope" value="Bacteria"/>
</dbReference>
<dbReference type="InParanoid" id="P39578"/>
<dbReference type="OrthoDB" id="1700484at2"/>
<dbReference type="PhylomeDB" id="P39578"/>
<dbReference type="BioCyc" id="BSUB:BSU38530-MONOMER"/>
<dbReference type="BioCyc" id="MetaCyc:BSU38530-MONOMER"/>
<dbReference type="UniPathway" id="UPA00556"/>
<dbReference type="Proteomes" id="UP000001570">
    <property type="component" value="Chromosome"/>
</dbReference>
<dbReference type="GO" id="GO:0005886">
    <property type="term" value="C:plasma membrane"/>
    <property type="evidence" value="ECO:0007669"/>
    <property type="project" value="UniProtKB-SubCell"/>
</dbReference>
<dbReference type="GO" id="GO:0070395">
    <property type="term" value="P:lipoteichoic acid biosynthetic process"/>
    <property type="evidence" value="ECO:0007669"/>
    <property type="project" value="UniProtKB-UniPathway"/>
</dbReference>
<dbReference type="InterPro" id="IPR006998">
    <property type="entry name" value="DltD"/>
</dbReference>
<dbReference type="InterPro" id="IPR023896">
    <property type="entry name" value="LTA_DltD"/>
</dbReference>
<dbReference type="NCBIfam" id="TIGR04092">
    <property type="entry name" value="LTA_DltD"/>
    <property type="match status" value="1"/>
</dbReference>
<dbReference type="PANTHER" id="PTHR40039">
    <property type="entry name" value="PROTEIN DLTD"/>
    <property type="match status" value="1"/>
</dbReference>
<dbReference type="PANTHER" id="PTHR40039:SF1">
    <property type="entry name" value="PROTEIN DLTD"/>
    <property type="match status" value="1"/>
</dbReference>
<dbReference type="Pfam" id="PF04914">
    <property type="entry name" value="DltD"/>
    <property type="match status" value="1"/>
</dbReference>
<dbReference type="PIRSF" id="PIRSF021438">
    <property type="entry name" value="DltD"/>
    <property type="match status" value="1"/>
</dbReference>
<dbReference type="SUPFAM" id="SSF52266">
    <property type="entry name" value="SGNH hydrolase"/>
    <property type="match status" value="1"/>
</dbReference>
<name>DLTD_BACSU</name>
<keyword id="KW-1003">Cell membrane</keyword>
<keyword id="KW-0472">Membrane</keyword>
<keyword id="KW-1185">Reference proteome</keyword>
<keyword id="KW-0735">Signal-anchor</keyword>
<keyword id="KW-0812">Transmembrane</keyword>
<keyword id="KW-1133">Transmembrane helix</keyword>
<organism>
    <name type="scientific">Bacillus subtilis (strain 168)</name>
    <dbReference type="NCBI Taxonomy" id="224308"/>
    <lineage>
        <taxon>Bacteria</taxon>
        <taxon>Bacillati</taxon>
        <taxon>Bacillota</taxon>
        <taxon>Bacilli</taxon>
        <taxon>Bacillales</taxon>
        <taxon>Bacillaceae</taxon>
        <taxon>Bacillus</taxon>
    </lineage>
</organism>
<accession>P39578</accession>
<evidence type="ECO:0000250" key="1">
    <source>
        <dbReference type="UniProtKB" id="Q2FZW3"/>
    </source>
</evidence>
<evidence type="ECO:0000250" key="2">
    <source>
        <dbReference type="UniProtKB" id="Q9RMN7"/>
    </source>
</evidence>
<evidence type="ECO:0000255" key="3"/>
<evidence type="ECO:0000305" key="4"/>
<evidence type="ECO:0000305" key="5">
    <source>
    </source>
</evidence>
<evidence type="ECO:0000305" key="6">
    <source>
    </source>
</evidence>
<sequence>MKKRFFGPIILAFILFAGAIAIPSSWLTGFITDKRVKESATALNPSMFQGLYLQDQMLKDPTYLPIYGSSELSRLDEFHPSNYFQVNNEGFTPYLVGKGGSQSLIHSLNFAAHMDQLKGKKIVFIVSPQWFIKRGSDEQHFAPNYSALQGLDLAFNDQIDPEIKKKMMKRMLRFKAVQNDAILSELYKAMVNGQTWKVNALKPAAKVYYSMLEKKDLYYSTTESSGPKRYISQSVKDKSWSELNKLADQSGKRHSGSNDFHIDNPVYKKLKPKVPKLKGKNKGRSYAVSPEYGDFEMMLDILKDAGAEPMFVTIPVNGKWYDYTGFPKKGRTDYYKKVNKQIRAKGFQVADFSGHEYDPYFMKDTIHIGWKGWVYVDKAIDEFYKTGKVTSS</sequence>
<gene>
    <name type="primary">dltD</name>
    <name type="ordered locus">BSU38530</name>
    <name type="ORF">ipa-2r</name>
</gene>
<reference key="1">
    <citation type="journal article" date="1993" name="Mol. Microbiol.">
        <title>Bacillus subtilis genome project: cloning and sequencing of the 97 kb region from 325 degrees to 333 degrees.</title>
        <authorList>
            <person name="Glaser P."/>
            <person name="Kunst F."/>
            <person name="Arnaud M."/>
            <person name="Coudart M.P."/>
            <person name="Gonzales W."/>
            <person name="Hullo M.-F."/>
            <person name="Ionescu M."/>
            <person name="Lubochinsky B."/>
            <person name="Marcelino L."/>
            <person name="Moszer I."/>
            <person name="Presecan E."/>
            <person name="Santana M."/>
            <person name="Schneider E."/>
            <person name="Schweizer J."/>
            <person name="Vertes A."/>
            <person name="Rapoport G."/>
            <person name="Danchin A."/>
        </authorList>
    </citation>
    <scope>NUCLEOTIDE SEQUENCE [GENOMIC DNA]</scope>
    <source>
        <strain>168</strain>
    </source>
</reference>
<reference key="2">
    <citation type="journal article" date="1997" name="Nature">
        <title>The complete genome sequence of the Gram-positive bacterium Bacillus subtilis.</title>
        <authorList>
            <person name="Kunst F."/>
            <person name="Ogasawara N."/>
            <person name="Moszer I."/>
            <person name="Albertini A.M."/>
            <person name="Alloni G."/>
            <person name="Azevedo V."/>
            <person name="Bertero M.G."/>
            <person name="Bessieres P."/>
            <person name="Bolotin A."/>
            <person name="Borchert S."/>
            <person name="Borriss R."/>
            <person name="Boursier L."/>
            <person name="Brans A."/>
            <person name="Braun M."/>
            <person name="Brignell S.C."/>
            <person name="Bron S."/>
            <person name="Brouillet S."/>
            <person name="Bruschi C.V."/>
            <person name="Caldwell B."/>
            <person name="Capuano V."/>
            <person name="Carter N.M."/>
            <person name="Choi S.-K."/>
            <person name="Codani J.-J."/>
            <person name="Connerton I.F."/>
            <person name="Cummings N.J."/>
            <person name="Daniel R.A."/>
            <person name="Denizot F."/>
            <person name="Devine K.M."/>
            <person name="Duesterhoeft A."/>
            <person name="Ehrlich S.D."/>
            <person name="Emmerson P.T."/>
            <person name="Entian K.-D."/>
            <person name="Errington J."/>
            <person name="Fabret C."/>
            <person name="Ferrari E."/>
            <person name="Foulger D."/>
            <person name="Fritz C."/>
            <person name="Fujita M."/>
            <person name="Fujita Y."/>
            <person name="Fuma S."/>
            <person name="Galizzi A."/>
            <person name="Galleron N."/>
            <person name="Ghim S.-Y."/>
            <person name="Glaser P."/>
            <person name="Goffeau A."/>
            <person name="Golightly E.J."/>
            <person name="Grandi G."/>
            <person name="Guiseppi G."/>
            <person name="Guy B.J."/>
            <person name="Haga K."/>
            <person name="Haiech J."/>
            <person name="Harwood C.R."/>
            <person name="Henaut A."/>
            <person name="Hilbert H."/>
            <person name="Holsappel S."/>
            <person name="Hosono S."/>
            <person name="Hullo M.-F."/>
            <person name="Itaya M."/>
            <person name="Jones L.-M."/>
            <person name="Joris B."/>
            <person name="Karamata D."/>
            <person name="Kasahara Y."/>
            <person name="Klaerr-Blanchard M."/>
            <person name="Klein C."/>
            <person name="Kobayashi Y."/>
            <person name="Koetter P."/>
            <person name="Koningstein G."/>
            <person name="Krogh S."/>
            <person name="Kumano M."/>
            <person name="Kurita K."/>
            <person name="Lapidus A."/>
            <person name="Lardinois S."/>
            <person name="Lauber J."/>
            <person name="Lazarevic V."/>
            <person name="Lee S.-M."/>
            <person name="Levine A."/>
            <person name="Liu H."/>
            <person name="Masuda S."/>
            <person name="Mauel C."/>
            <person name="Medigue C."/>
            <person name="Medina N."/>
            <person name="Mellado R.P."/>
            <person name="Mizuno M."/>
            <person name="Moestl D."/>
            <person name="Nakai S."/>
            <person name="Noback M."/>
            <person name="Noone D."/>
            <person name="O'Reilly M."/>
            <person name="Ogawa K."/>
            <person name="Ogiwara A."/>
            <person name="Oudega B."/>
            <person name="Park S.-H."/>
            <person name="Parro V."/>
            <person name="Pohl T.M."/>
            <person name="Portetelle D."/>
            <person name="Porwollik S."/>
            <person name="Prescott A.M."/>
            <person name="Presecan E."/>
            <person name="Pujic P."/>
            <person name="Purnelle B."/>
            <person name="Rapoport G."/>
            <person name="Rey M."/>
            <person name="Reynolds S."/>
            <person name="Rieger M."/>
            <person name="Rivolta C."/>
            <person name="Rocha E."/>
            <person name="Roche B."/>
            <person name="Rose M."/>
            <person name="Sadaie Y."/>
            <person name="Sato T."/>
            <person name="Scanlan E."/>
            <person name="Schleich S."/>
            <person name="Schroeter R."/>
            <person name="Scoffone F."/>
            <person name="Sekiguchi J."/>
            <person name="Sekowska A."/>
            <person name="Seror S.J."/>
            <person name="Serror P."/>
            <person name="Shin B.-S."/>
            <person name="Soldo B."/>
            <person name="Sorokin A."/>
            <person name="Tacconi E."/>
            <person name="Takagi T."/>
            <person name="Takahashi H."/>
            <person name="Takemaru K."/>
            <person name="Takeuchi M."/>
            <person name="Tamakoshi A."/>
            <person name="Tanaka T."/>
            <person name="Terpstra P."/>
            <person name="Tognoni A."/>
            <person name="Tosato V."/>
            <person name="Uchiyama S."/>
            <person name="Vandenbol M."/>
            <person name="Vannier F."/>
            <person name="Vassarotti A."/>
            <person name="Viari A."/>
            <person name="Wambutt R."/>
            <person name="Wedler E."/>
            <person name="Wedler H."/>
            <person name="Weitzenegger T."/>
            <person name="Winters P."/>
            <person name="Wipat A."/>
            <person name="Yamamoto H."/>
            <person name="Yamane K."/>
            <person name="Yasumoto K."/>
            <person name="Yata K."/>
            <person name="Yoshida K."/>
            <person name="Yoshikawa H.-F."/>
            <person name="Zumstein E."/>
            <person name="Yoshikawa H."/>
            <person name="Danchin A."/>
        </authorList>
    </citation>
    <scope>NUCLEOTIDE SEQUENCE [LARGE SCALE GENOMIC DNA]</scope>
    <source>
        <strain>168</strain>
    </source>
</reference>
<reference key="3">
    <citation type="journal article" date="1995" name="J. Biol. Chem.">
        <title>Incorporation of D-alanine into lipoteichoic acid and wall teichoic acid in Bacillus subtilis. Identification of genes and regulation.</title>
        <authorList>
            <person name="Perego M."/>
            <person name="Glaser P."/>
            <person name="Minutello A."/>
            <person name="Strauch M.A."/>
            <person name="Leopold K."/>
            <person name="Fischer W."/>
        </authorList>
    </citation>
    <scope>FUNCTION</scope>
</reference>
<reference key="4">
    <citation type="journal article" date="2016" name="F1000Research">
        <title>Alanylated lipoteichoic acid primer in Bacillus subtilis.</title>
        <authorList>
            <person name="Luo Y."/>
        </authorList>
    </citation>
    <scope>FUNCTION</scope>
</reference>